<protein>
    <recommendedName>
        <fullName evidence="1">23S rRNA (uracil(1939)-C(5))-methyltransferase RlmD</fullName>
        <ecNumber evidence="1">2.1.1.190</ecNumber>
    </recommendedName>
    <alternativeName>
        <fullName evidence="1">23S rRNA(m5U1939)-methyltransferase</fullName>
    </alternativeName>
</protein>
<comment type="function">
    <text evidence="1">Catalyzes the formation of 5-methyl-uridine at position 1939 (m5U1939) in 23S rRNA.</text>
</comment>
<comment type="catalytic activity">
    <reaction evidence="1">
        <text>uridine(1939) in 23S rRNA + S-adenosyl-L-methionine = 5-methyluridine(1939) in 23S rRNA + S-adenosyl-L-homocysteine + H(+)</text>
        <dbReference type="Rhea" id="RHEA:42908"/>
        <dbReference type="Rhea" id="RHEA-COMP:10278"/>
        <dbReference type="Rhea" id="RHEA-COMP:10279"/>
        <dbReference type="ChEBI" id="CHEBI:15378"/>
        <dbReference type="ChEBI" id="CHEBI:57856"/>
        <dbReference type="ChEBI" id="CHEBI:59789"/>
        <dbReference type="ChEBI" id="CHEBI:65315"/>
        <dbReference type="ChEBI" id="CHEBI:74447"/>
        <dbReference type="EC" id="2.1.1.190"/>
    </reaction>
</comment>
<comment type="similarity">
    <text evidence="1">Belongs to the class I-like SAM-binding methyltransferase superfamily. RNA M5U methyltransferase family. RlmD subfamily.</text>
</comment>
<dbReference type="EC" id="2.1.1.190" evidence="1"/>
<dbReference type="EMBL" id="FN995097">
    <property type="protein sequence ID" value="CBN86747.1"/>
    <property type="molecule type" value="Genomic_DNA"/>
</dbReference>
<dbReference type="RefSeq" id="WP_013448524.1">
    <property type="nucleotide sequence ID" value="NC_014752.1"/>
</dbReference>
<dbReference type="SMR" id="E4ZBM0"/>
<dbReference type="KEGG" id="nla:NLA_5070"/>
<dbReference type="eggNOG" id="COG2265">
    <property type="taxonomic scope" value="Bacteria"/>
</dbReference>
<dbReference type="HOGENOM" id="CLU_014689_8_2_4"/>
<dbReference type="Proteomes" id="UP000008723">
    <property type="component" value="Chromosome"/>
</dbReference>
<dbReference type="GO" id="GO:0051539">
    <property type="term" value="F:4 iron, 4 sulfur cluster binding"/>
    <property type="evidence" value="ECO:0007669"/>
    <property type="project" value="UniProtKB-KW"/>
</dbReference>
<dbReference type="GO" id="GO:0005506">
    <property type="term" value="F:iron ion binding"/>
    <property type="evidence" value="ECO:0007669"/>
    <property type="project" value="UniProtKB-UniRule"/>
</dbReference>
<dbReference type="GO" id="GO:0003723">
    <property type="term" value="F:RNA binding"/>
    <property type="evidence" value="ECO:0007669"/>
    <property type="project" value="InterPro"/>
</dbReference>
<dbReference type="GO" id="GO:0070041">
    <property type="term" value="F:rRNA (uridine-C5-)-methyltransferase activity"/>
    <property type="evidence" value="ECO:0007669"/>
    <property type="project" value="UniProtKB-UniRule"/>
</dbReference>
<dbReference type="GO" id="GO:0070475">
    <property type="term" value="P:rRNA base methylation"/>
    <property type="evidence" value="ECO:0007669"/>
    <property type="project" value="TreeGrafter"/>
</dbReference>
<dbReference type="CDD" id="cd02440">
    <property type="entry name" value="AdoMet_MTases"/>
    <property type="match status" value="1"/>
</dbReference>
<dbReference type="Gene3D" id="2.40.50.1070">
    <property type="match status" value="1"/>
</dbReference>
<dbReference type="Gene3D" id="2.40.50.140">
    <property type="entry name" value="Nucleic acid-binding proteins"/>
    <property type="match status" value="1"/>
</dbReference>
<dbReference type="Gene3D" id="3.40.50.150">
    <property type="entry name" value="Vaccinia Virus protein VP39"/>
    <property type="match status" value="1"/>
</dbReference>
<dbReference type="HAMAP" id="MF_01010">
    <property type="entry name" value="23SrRNA_methyltr_RlmD"/>
    <property type="match status" value="1"/>
</dbReference>
<dbReference type="InterPro" id="IPR001566">
    <property type="entry name" value="23S_rRNA_MeTrfase_RlmD"/>
</dbReference>
<dbReference type="InterPro" id="IPR030390">
    <property type="entry name" value="MeTrfase_TrmA_AS"/>
</dbReference>
<dbReference type="InterPro" id="IPR012340">
    <property type="entry name" value="NA-bd_OB-fold"/>
</dbReference>
<dbReference type="InterPro" id="IPR029063">
    <property type="entry name" value="SAM-dependent_MTases_sf"/>
</dbReference>
<dbReference type="InterPro" id="IPR002792">
    <property type="entry name" value="TRAM_dom"/>
</dbReference>
<dbReference type="InterPro" id="IPR010280">
    <property type="entry name" value="U5_MeTrfase_fam"/>
</dbReference>
<dbReference type="NCBIfam" id="NF009639">
    <property type="entry name" value="PRK13168.1"/>
    <property type="match status" value="1"/>
</dbReference>
<dbReference type="NCBIfam" id="TIGR00479">
    <property type="entry name" value="rumA"/>
    <property type="match status" value="1"/>
</dbReference>
<dbReference type="PANTHER" id="PTHR11061:SF49">
    <property type="entry name" value="23S RRNA (URACIL(1939)-C(5))-METHYLTRANSFERASE RLMD"/>
    <property type="match status" value="1"/>
</dbReference>
<dbReference type="PANTHER" id="PTHR11061">
    <property type="entry name" value="RNA M5U METHYLTRANSFERASE"/>
    <property type="match status" value="1"/>
</dbReference>
<dbReference type="Pfam" id="PF05958">
    <property type="entry name" value="tRNA_U5-meth_tr"/>
    <property type="match status" value="1"/>
</dbReference>
<dbReference type="SUPFAM" id="SSF50249">
    <property type="entry name" value="Nucleic acid-binding proteins"/>
    <property type="match status" value="1"/>
</dbReference>
<dbReference type="SUPFAM" id="SSF53335">
    <property type="entry name" value="S-adenosyl-L-methionine-dependent methyltransferases"/>
    <property type="match status" value="1"/>
</dbReference>
<dbReference type="PROSITE" id="PS51687">
    <property type="entry name" value="SAM_MT_RNA_M5U"/>
    <property type="match status" value="1"/>
</dbReference>
<dbReference type="PROSITE" id="PS50926">
    <property type="entry name" value="TRAM"/>
    <property type="match status" value="1"/>
</dbReference>
<dbReference type="PROSITE" id="PS01230">
    <property type="entry name" value="TRMA_1"/>
    <property type="match status" value="1"/>
</dbReference>
<gene>
    <name evidence="1" type="primary">rlmD</name>
    <name type="ordered locus">NLA_5070</name>
</gene>
<accession>E4ZBM0</accession>
<feature type="chain" id="PRO_0000414809" description="23S rRNA (uracil(1939)-C(5))-methyltransferase RlmD">
    <location>
        <begin position="1"/>
        <end position="452"/>
    </location>
</feature>
<feature type="domain" description="TRAM" evidence="1">
    <location>
        <begin position="1"/>
        <end position="57"/>
    </location>
</feature>
<feature type="active site" description="Nucleophile" evidence="1">
    <location>
        <position position="395"/>
    </location>
</feature>
<feature type="binding site" evidence="1">
    <location>
        <position position="70"/>
    </location>
    <ligand>
        <name>[4Fe-4S] cluster</name>
        <dbReference type="ChEBI" id="CHEBI:49883"/>
    </ligand>
</feature>
<feature type="binding site" evidence="1">
    <location>
        <position position="76"/>
    </location>
    <ligand>
        <name>[4Fe-4S] cluster</name>
        <dbReference type="ChEBI" id="CHEBI:49883"/>
    </ligand>
</feature>
<feature type="binding site" evidence="1">
    <location>
        <position position="79"/>
    </location>
    <ligand>
        <name>[4Fe-4S] cluster</name>
        <dbReference type="ChEBI" id="CHEBI:49883"/>
    </ligand>
</feature>
<feature type="binding site" evidence="1">
    <location>
        <position position="157"/>
    </location>
    <ligand>
        <name>[4Fe-4S] cluster</name>
        <dbReference type="ChEBI" id="CHEBI:49883"/>
    </ligand>
</feature>
<feature type="binding site" evidence="1">
    <location>
        <position position="269"/>
    </location>
    <ligand>
        <name>S-adenosyl-L-methionine</name>
        <dbReference type="ChEBI" id="CHEBI:59789"/>
    </ligand>
</feature>
<feature type="binding site" evidence="1">
    <location>
        <position position="298"/>
    </location>
    <ligand>
        <name>S-adenosyl-L-methionine</name>
        <dbReference type="ChEBI" id="CHEBI:59789"/>
    </ligand>
</feature>
<feature type="binding site" evidence="1">
    <location>
        <position position="303"/>
    </location>
    <ligand>
        <name>S-adenosyl-L-methionine</name>
        <dbReference type="ChEBI" id="CHEBI:59789"/>
    </ligand>
</feature>
<feature type="binding site" evidence="1">
    <location>
        <position position="319"/>
    </location>
    <ligand>
        <name>S-adenosyl-L-methionine</name>
        <dbReference type="ChEBI" id="CHEBI:59789"/>
    </ligand>
</feature>
<feature type="binding site" evidence="1">
    <location>
        <position position="347"/>
    </location>
    <ligand>
        <name>S-adenosyl-L-methionine</name>
        <dbReference type="ChEBI" id="CHEBI:59789"/>
    </ligand>
</feature>
<feature type="binding site" evidence="1">
    <location>
        <position position="368"/>
    </location>
    <ligand>
        <name>S-adenosyl-L-methionine</name>
        <dbReference type="ChEBI" id="CHEBI:59789"/>
    </ligand>
</feature>
<sequence>METEVNVAEISALDYEGRGVTKVGGKTVFIKGALPSERVGFRIVRQKKQFDEAEAVAIFKVSDERTVPQCRYFERCGGCSLQHISPAAQVAFKQRMMEEQLERIGKVKPKQILLPIYGHVWHYRDRARFSVSLDKLCRLKLGFQAKKTNDVVDISSCMLLPKPVSDKLSAIRGLLQDLAEEGSVARFAEFYRGSEITVLNIAFKSKLRQNEENRIRQWFDSELSDGWQVWLQIEGGVSQPFYPKTDKTLKYTLPEFGIEMPFRPGDFTQINTDTNRLMVSRVVKMLDIRRGERIADLFCGLGNFSLPMAKSGADVVGIEGAENLVRRARQNARLNGCDRQTDFIAANLFDCTEKTVASWERFDKMLIDPPRSGAYEVVKSLHTPYLPQKIVYVSCNPSTLARDAGVLVEKGYMLSQAGIMNMFAQTSHTESVAVFDLLPQTGKNFLKIKGKD</sequence>
<organism>
    <name type="scientific">Neisseria lactamica (strain 020-06)</name>
    <dbReference type="NCBI Taxonomy" id="489653"/>
    <lineage>
        <taxon>Bacteria</taxon>
        <taxon>Pseudomonadati</taxon>
        <taxon>Pseudomonadota</taxon>
        <taxon>Betaproteobacteria</taxon>
        <taxon>Neisseriales</taxon>
        <taxon>Neisseriaceae</taxon>
        <taxon>Neisseria</taxon>
    </lineage>
</organism>
<evidence type="ECO:0000255" key="1">
    <source>
        <dbReference type="HAMAP-Rule" id="MF_01010"/>
    </source>
</evidence>
<keyword id="KW-0004">4Fe-4S</keyword>
<keyword id="KW-0408">Iron</keyword>
<keyword id="KW-0411">Iron-sulfur</keyword>
<keyword id="KW-0479">Metal-binding</keyword>
<keyword id="KW-0489">Methyltransferase</keyword>
<keyword id="KW-0698">rRNA processing</keyword>
<keyword id="KW-0949">S-adenosyl-L-methionine</keyword>
<keyword id="KW-0808">Transferase</keyword>
<proteinExistence type="inferred from homology"/>
<reference key="1">
    <citation type="journal article" date="2010" name="BMC Genomics">
        <title>Independent evolution of the core and accessory gene sets in the genus Neisseria: insights gained from the genome of Neisseria lactamica isolate 020-06.</title>
        <authorList>
            <person name="Bennett J.S."/>
            <person name="Bentley S.D."/>
            <person name="Vernikos G.S."/>
            <person name="Quail M.A."/>
            <person name="Cherevach I."/>
            <person name="White B."/>
            <person name="Parkhill J."/>
            <person name="Maiden M.C."/>
        </authorList>
    </citation>
    <scope>NUCLEOTIDE SEQUENCE [LARGE SCALE GENOMIC DNA]</scope>
    <source>
        <strain>020-06</strain>
    </source>
</reference>
<name>RLMD_NEIL0</name>